<gene>
    <name type="ORF">SPAC1039.07c</name>
</gene>
<sequence length="448" mass="48446">MSSHVSNNSILDPVTFWNQANKSLIRYGGDFAPKIIVRAKGCCVYDEQDNAILDFTSGQMSAILGHSHPDITACIEKNLPKLVHLFSGFLSPPVVQLATELSDLLPDGLDKTLFLSTGGEANEAALRMAKVYTNKYECVAFSSSWHGVTGGAASLTFAAARRGYGPALPGSYTIPEPNPKLSPFRDAKGNYDWQKELDYSFYMLDKQSTGSLACMIVETILSTGGIIELPQGYLKALKKKCEERGMLLIIDEAQTGIGRTGSMFSFEHHGIVPDILTLSKSLGAGTALAAVITSEEIEKVCYDNGFVFYTTHASDPLPAAIGSTVLKVVKRDNLVEKAKISGELLRSDLLRLKDKHPLIVDVRGLGLLQGIEIASCTDPSKPSDFLGTVIGDKCLELGMNCNIVHLRGIGGVFRIAPPLTVTDEEIHKAIEIFDSALTFTAKEFSGSY</sequence>
<protein>
    <recommendedName>
        <fullName>Uncharacterized aminotransferase C1039.07c</fullName>
        <ecNumber>2.6.-.-</ecNumber>
    </recommendedName>
</protein>
<evidence type="ECO:0000250" key="1"/>
<evidence type="ECO:0000269" key="2">
    <source>
    </source>
</evidence>
<evidence type="ECO:0000305" key="3"/>
<reference key="1">
    <citation type="journal article" date="2002" name="Nature">
        <title>The genome sequence of Schizosaccharomyces pombe.</title>
        <authorList>
            <person name="Wood V."/>
            <person name="Gwilliam R."/>
            <person name="Rajandream M.A."/>
            <person name="Lyne M.H."/>
            <person name="Lyne R."/>
            <person name="Stewart A."/>
            <person name="Sgouros J.G."/>
            <person name="Peat N."/>
            <person name="Hayles J."/>
            <person name="Baker S.G."/>
            <person name="Basham D."/>
            <person name="Bowman S."/>
            <person name="Brooks K."/>
            <person name="Brown D."/>
            <person name="Brown S."/>
            <person name="Chillingworth T."/>
            <person name="Churcher C.M."/>
            <person name="Collins M."/>
            <person name="Connor R."/>
            <person name="Cronin A."/>
            <person name="Davis P."/>
            <person name="Feltwell T."/>
            <person name="Fraser A."/>
            <person name="Gentles S."/>
            <person name="Goble A."/>
            <person name="Hamlin N."/>
            <person name="Harris D.E."/>
            <person name="Hidalgo J."/>
            <person name="Hodgson G."/>
            <person name="Holroyd S."/>
            <person name="Hornsby T."/>
            <person name="Howarth S."/>
            <person name="Huckle E.J."/>
            <person name="Hunt S."/>
            <person name="Jagels K."/>
            <person name="James K.D."/>
            <person name="Jones L."/>
            <person name="Jones M."/>
            <person name="Leather S."/>
            <person name="McDonald S."/>
            <person name="McLean J."/>
            <person name="Mooney P."/>
            <person name="Moule S."/>
            <person name="Mungall K.L."/>
            <person name="Murphy L.D."/>
            <person name="Niblett D."/>
            <person name="Odell C."/>
            <person name="Oliver K."/>
            <person name="O'Neil S."/>
            <person name="Pearson D."/>
            <person name="Quail M.A."/>
            <person name="Rabbinowitsch E."/>
            <person name="Rutherford K.M."/>
            <person name="Rutter S."/>
            <person name="Saunders D."/>
            <person name="Seeger K."/>
            <person name="Sharp S."/>
            <person name="Skelton J."/>
            <person name="Simmonds M.N."/>
            <person name="Squares R."/>
            <person name="Squares S."/>
            <person name="Stevens K."/>
            <person name="Taylor K."/>
            <person name="Taylor R.G."/>
            <person name="Tivey A."/>
            <person name="Walsh S.V."/>
            <person name="Warren T."/>
            <person name="Whitehead S."/>
            <person name="Woodward J.R."/>
            <person name="Volckaert G."/>
            <person name="Aert R."/>
            <person name="Robben J."/>
            <person name="Grymonprez B."/>
            <person name="Weltjens I."/>
            <person name="Vanstreels E."/>
            <person name="Rieger M."/>
            <person name="Schaefer M."/>
            <person name="Mueller-Auer S."/>
            <person name="Gabel C."/>
            <person name="Fuchs M."/>
            <person name="Duesterhoeft A."/>
            <person name="Fritzc C."/>
            <person name="Holzer E."/>
            <person name="Moestl D."/>
            <person name="Hilbert H."/>
            <person name="Borzym K."/>
            <person name="Langer I."/>
            <person name="Beck A."/>
            <person name="Lehrach H."/>
            <person name="Reinhardt R."/>
            <person name="Pohl T.M."/>
            <person name="Eger P."/>
            <person name="Zimmermann W."/>
            <person name="Wedler H."/>
            <person name="Wambutt R."/>
            <person name="Purnelle B."/>
            <person name="Goffeau A."/>
            <person name="Cadieu E."/>
            <person name="Dreano S."/>
            <person name="Gloux S."/>
            <person name="Lelaure V."/>
            <person name="Mottier S."/>
            <person name="Galibert F."/>
            <person name="Aves S.J."/>
            <person name="Xiang Z."/>
            <person name="Hunt C."/>
            <person name="Moore K."/>
            <person name="Hurst S.M."/>
            <person name="Lucas M."/>
            <person name="Rochet M."/>
            <person name="Gaillardin C."/>
            <person name="Tallada V.A."/>
            <person name="Garzon A."/>
            <person name="Thode G."/>
            <person name="Daga R.R."/>
            <person name="Cruzado L."/>
            <person name="Jimenez J."/>
            <person name="Sanchez M."/>
            <person name="del Rey F."/>
            <person name="Benito J."/>
            <person name="Dominguez A."/>
            <person name="Revuelta J.L."/>
            <person name="Moreno S."/>
            <person name="Armstrong J."/>
            <person name="Forsburg S.L."/>
            <person name="Cerutti L."/>
            <person name="Lowe T."/>
            <person name="McCombie W.R."/>
            <person name="Paulsen I."/>
            <person name="Potashkin J."/>
            <person name="Shpakovski G.V."/>
            <person name="Ussery D."/>
            <person name="Barrell B.G."/>
            <person name="Nurse P."/>
        </authorList>
    </citation>
    <scope>NUCLEOTIDE SEQUENCE [LARGE SCALE GENOMIC DNA]</scope>
    <source>
        <strain>972 / ATCC 24843</strain>
    </source>
</reference>
<reference key="2">
    <citation type="journal article" date="2006" name="Nat. Biotechnol.">
        <title>ORFeome cloning and global analysis of protein localization in the fission yeast Schizosaccharomyces pombe.</title>
        <authorList>
            <person name="Matsuyama A."/>
            <person name="Arai R."/>
            <person name="Yashiroda Y."/>
            <person name="Shirai A."/>
            <person name="Kamata A."/>
            <person name="Sekido S."/>
            <person name="Kobayashi Y."/>
            <person name="Hashimoto A."/>
            <person name="Hamamoto M."/>
            <person name="Hiraoka Y."/>
            <person name="Horinouchi S."/>
            <person name="Yoshida M."/>
        </authorList>
    </citation>
    <scope>SUBCELLULAR LOCATION [LARGE SCALE ANALYSIS]</scope>
</reference>
<keyword id="KW-0032">Aminotransferase</keyword>
<keyword id="KW-0963">Cytoplasm</keyword>
<keyword id="KW-0496">Mitochondrion</keyword>
<keyword id="KW-0663">Pyridoxal phosphate</keyword>
<keyword id="KW-1185">Reference proteome</keyword>
<keyword id="KW-0808">Transferase</keyword>
<name>YFZ7_SCHPO</name>
<comment type="subcellular location">
    <subcellularLocation>
        <location evidence="2">Cytoplasm</location>
    </subcellularLocation>
    <subcellularLocation>
        <location evidence="2">Mitochondrion</location>
    </subcellularLocation>
</comment>
<comment type="similarity">
    <text evidence="3">Belongs to the class-III pyridoxal-phosphate-dependent aminotransferase family.</text>
</comment>
<feature type="chain" id="PRO_0000358867" description="Uncharacterized aminotransferase C1039.07c">
    <location>
        <begin position="1"/>
        <end position="448"/>
    </location>
</feature>
<feature type="modified residue" description="N6-(pyridoxal phosphate)lysine" evidence="1">
    <location>
        <position position="280"/>
    </location>
</feature>
<dbReference type="EC" id="2.6.-.-"/>
<dbReference type="EMBL" id="CU329670">
    <property type="protein sequence ID" value="CAB63543.1"/>
    <property type="molecule type" value="Genomic_DNA"/>
</dbReference>
<dbReference type="PIR" id="T50057">
    <property type="entry name" value="T50057"/>
</dbReference>
<dbReference type="RefSeq" id="NP_594998.1">
    <property type="nucleotide sequence ID" value="NM_001020429.2"/>
</dbReference>
<dbReference type="SMR" id="Q9US34"/>
<dbReference type="FunCoup" id="Q9US34">
    <property type="interactions" value="10"/>
</dbReference>
<dbReference type="STRING" id="284812.Q9US34"/>
<dbReference type="PaxDb" id="4896-SPAC1039.07c.1"/>
<dbReference type="EnsemblFungi" id="SPAC1039.07c.1">
    <property type="protein sequence ID" value="SPAC1039.07c.1:pep"/>
    <property type="gene ID" value="SPAC1039.07c"/>
</dbReference>
<dbReference type="KEGG" id="spo:2542926"/>
<dbReference type="PomBase" id="SPAC1039.07c"/>
<dbReference type="VEuPathDB" id="FungiDB:SPAC1039.07c"/>
<dbReference type="eggNOG" id="KOG1404">
    <property type="taxonomic scope" value="Eukaryota"/>
</dbReference>
<dbReference type="HOGENOM" id="CLU_016922_10_0_1"/>
<dbReference type="InParanoid" id="Q9US34"/>
<dbReference type="OMA" id="ERDNICQ"/>
<dbReference type="PhylomeDB" id="Q9US34"/>
<dbReference type="Reactome" id="R-SPO-389661">
    <property type="pathway name" value="Glyoxylate metabolism and glycine degradation"/>
</dbReference>
<dbReference type="PRO" id="PR:Q9US34"/>
<dbReference type="Proteomes" id="UP000002485">
    <property type="component" value="Chromosome I"/>
</dbReference>
<dbReference type="GO" id="GO:0005829">
    <property type="term" value="C:cytosol"/>
    <property type="evidence" value="ECO:0007005"/>
    <property type="project" value="PomBase"/>
</dbReference>
<dbReference type="GO" id="GO:0005739">
    <property type="term" value="C:mitochondrion"/>
    <property type="evidence" value="ECO:0007005"/>
    <property type="project" value="PomBase"/>
</dbReference>
<dbReference type="GO" id="GO:0030170">
    <property type="term" value="F:pyridoxal phosphate binding"/>
    <property type="evidence" value="ECO:0000255"/>
    <property type="project" value="PomBase"/>
</dbReference>
<dbReference type="GO" id="GO:0008483">
    <property type="term" value="F:transaminase activity"/>
    <property type="evidence" value="ECO:0000255"/>
    <property type="project" value="PomBase"/>
</dbReference>
<dbReference type="CDD" id="cd00610">
    <property type="entry name" value="OAT_like"/>
    <property type="match status" value="1"/>
</dbReference>
<dbReference type="Gene3D" id="3.90.1150.10">
    <property type="entry name" value="Aspartate Aminotransferase, domain 1"/>
    <property type="match status" value="1"/>
</dbReference>
<dbReference type="Gene3D" id="3.40.640.10">
    <property type="entry name" value="Type I PLP-dependent aspartate aminotransferase-like (Major domain)"/>
    <property type="match status" value="1"/>
</dbReference>
<dbReference type="InterPro" id="IPR005814">
    <property type="entry name" value="Aminotrans_3"/>
</dbReference>
<dbReference type="InterPro" id="IPR049704">
    <property type="entry name" value="Aminotrans_3_PPA_site"/>
</dbReference>
<dbReference type="InterPro" id="IPR015424">
    <property type="entry name" value="PyrdxlP-dep_Trfase"/>
</dbReference>
<dbReference type="InterPro" id="IPR015421">
    <property type="entry name" value="PyrdxlP-dep_Trfase_major"/>
</dbReference>
<dbReference type="InterPro" id="IPR015422">
    <property type="entry name" value="PyrdxlP-dep_Trfase_small"/>
</dbReference>
<dbReference type="PANTHER" id="PTHR45688">
    <property type="match status" value="1"/>
</dbReference>
<dbReference type="PANTHER" id="PTHR45688:SF13">
    <property type="entry name" value="ALANINE--GLYOXYLATE AMINOTRANSFERASE 2-LIKE"/>
    <property type="match status" value="1"/>
</dbReference>
<dbReference type="Pfam" id="PF00202">
    <property type="entry name" value="Aminotran_3"/>
    <property type="match status" value="1"/>
</dbReference>
<dbReference type="PIRSF" id="PIRSF000521">
    <property type="entry name" value="Transaminase_4ab_Lys_Orn"/>
    <property type="match status" value="1"/>
</dbReference>
<dbReference type="SUPFAM" id="SSF53383">
    <property type="entry name" value="PLP-dependent transferases"/>
    <property type="match status" value="1"/>
</dbReference>
<dbReference type="PROSITE" id="PS00600">
    <property type="entry name" value="AA_TRANSFER_CLASS_3"/>
    <property type="match status" value="1"/>
</dbReference>
<accession>Q9US34</accession>
<proteinExistence type="inferred from homology"/>
<organism>
    <name type="scientific">Schizosaccharomyces pombe (strain 972 / ATCC 24843)</name>
    <name type="common">Fission yeast</name>
    <dbReference type="NCBI Taxonomy" id="284812"/>
    <lineage>
        <taxon>Eukaryota</taxon>
        <taxon>Fungi</taxon>
        <taxon>Dikarya</taxon>
        <taxon>Ascomycota</taxon>
        <taxon>Taphrinomycotina</taxon>
        <taxon>Schizosaccharomycetes</taxon>
        <taxon>Schizosaccharomycetales</taxon>
        <taxon>Schizosaccharomycetaceae</taxon>
        <taxon>Schizosaccharomyces</taxon>
    </lineage>
</organism>